<keyword id="KW-0175">Coiled coil</keyword>
<keyword id="KW-0488">Methylation</keyword>
<keyword id="KW-1185">Reference proteome</keyword>
<evidence type="ECO:0000255" key="1"/>
<evidence type="ECO:0000255" key="2">
    <source>
        <dbReference type="PROSITE-ProRule" id="PRU00145"/>
    </source>
</evidence>
<evidence type="ECO:0000256" key="3">
    <source>
        <dbReference type="SAM" id="MobiDB-lite"/>
    </source>
</evidence>
<evidence type="ECO:0000305" key="4"/>
<evidence type="ECO:0007744" key="5">
    <source>
    </source>
</evidence>
<organism>
    <name type="scientific">Mus musculus</name>
    <name type="common">Mouse</name>
    <dbReference type="NCBI Taxonomy" id="10090"/>
    <lineage>
        <taxon>Eukaryota</taxon>
        <taxon>Metazoa</taxon>
        <taxon>Chordata</taxon>
        <taxon>Craniata</taxon>
        <taxon>Vertebrata</taxon>
        <taxon>Euteleostomi</taxon>
        <taxon>Mammalia</taxon>
        <taxon>Eutheria</taxon>
        <taxon>Euarchontoglires</taxon>
        <taxon>Glires</taxon>
        <taxon>Rodentia</taxon>
        <taxon>Myomorpha</taxon>
        <taxon>Muroidea</taxon>
        <taxon>Muridae</taxon>
        <taxon>Murinae</taxon>
        <taxon>Mus</taxon>
        <taxon>Mus</taxon>
    </lineage>
</organism>
<reference key="1">
    <citation type="journal article" date="2009" name="PLoS Biol.">
        <title>Lineage-specific biology revealed by a finished genome assembly of the mouse.</title>
        <authorList>
            <person name="Church D.M."/>
            <person name="Goodstadt L."/>
            <person name="Hillier L.W."/>
            <person name="Zody M.C."/>
            <person name="Goldstein S."/>
            <person name="She X."/>
            <person name="Bult C.J."/>
            <person name="Agarwala R."/>
            <person name="Cherry J.L."/>
            <person name="DiCuccio M."/>
            <person name="Hlavina W."/>
            <person name="Kapustin Y."/>
            <person name="Meric P."/>
            <person name="Maglott D."/>
            <person name="Birtle Z."/>
            <person name="Marques A.C."/>
            <person name="Graves T."/>
            <person name="Zhou S."/>
            <person name="Teague B."/>
            <person name="Potamousis K."/>
            <person name="Churas C."/>
            <person name="Place M."/>
            <person name="Herschleb J."/>
            <person name="Runnheim R."/>
            <person name="Forrest D."/>
            <person name="Amos-Landgraf J."/>
            <person name="Schwartz D.C."/>
            <person name="Cheng Z."/>
            <person name="Lindblad-Toh K."/>
            <person name="Eichler E.E."/>
            <person name="Ponting C.P."/>
        </authorList>
    </citation>
    <scope>NUCLEOTIDE SEQUENCE [LARGE SCALE GENOMIC DNA]</scope>
    <source>
        <strain>C57BL/6J</strain>
    </source>
</reference>
<reference key="2">
    <citation type="journal article" date="2004" name="Genome Res.">
        <title>The status, quality, and expansion of the NIH full-length cDNA project: the Mammalian Gene Collection (MGC).</title>
        <authorList>
            <consortium name="The MGC Project Team"/>
        </authorList>
    </citation>
    <scope>NUCLEOTIDE SEQUENCE [LARGE SCALE MRNA]</scope>
    <source>
        <tissue>Brain</tissue>
    </source>
</reference>
<reference key="3">
    <citation type="journal article" date="2014" name="Mol. Cell. Proteomics">
        <title>Immunoaffinity enrichment and mass spectrometry analysis of protein methylation.</title>
        <authorList>
            <person name="Guo A."/>
            <person name="Gu H."/>
            <person name="Zhou J."/>
            <person name="Mulhern D."/>
            <person name="Wang Y."/>
            <person name="Lee K.A."/>
            <person name="Yang V."/>
            <person name="Aguiar M."/>
            <person name="Kornhauser J."/>
            <person name="Jia X."/>
            <person name="Ren J."/>
            <person name="Beausoleil S.A."/>
            <person name="Silva J.C."/>
            <person name="Vemulapalli V."/>
            <person name="Bedford M.T."/>
            <person name="Comb M.J."/>
        </authorList>
    </citation>
    <scope>METHYLATION [LARGE SCALE ANALYSIS] AT ARG-502</scope>
    <scope>IDENTIFICATION BY MASS SPECTROMETRY [LARGE SCALE ANALYSIS]</scope>
    <source>
        <tissue>Brain</tissue>
    </source>
</reference>
<feature type="chain" id="PRO_0000415810" description="Pleckstrin homology domain-containing family D member 1">
    <location>
        <begin position="1"/>
        <end position="505"/>
    </location>
</feature>
<feature type="domain" description="PH" evidence="2">
    <location>
        <begin position="28"/>
        <end position="136"/>
    </location>
</feature>
<feature type="region of interest" description="Disordered" evidence="3">
    <location>
        <begin position="264"/>
        <end position="284"/>
    </location>
</feature>
<feature type="coiled-coil region" evidence="1">
    <location>
        <begin position="146"/>
        <end position="391"/>
    </location>
</feature>
<feature type="compositionally biased region" description="Polar residues" evidence="3">
    <location>
        <begin position="267"/>
        <end position="278"/>
    </location>
</feature>
<feature type="modified residue" description="Omega-N-methylarginine" evidence="5">
    <location>
        <position position="502"/>
    </location>
</feature>
<protein>
    <recommendedName>
        <fullName>Pleckstrin homology domain-containing family D member 1</fullName>
        <shortName>PH domain-containing family D member 1</shortName>
    </recommendedName>
</protein>
<gene>
    <name type="primary">Plekhd1</name>
</gene>
<dbReference type="EMBL" id="AC134537">
    <property type="status" value="NOT_ANNOTATED_CDS"/>
    <property type="molecule type" value="Genomic_DNA"/>
</dbReference>
<dbReference type="EMBL" id="BC137602">
    <property type="protein sequence ID" value="AAI37603.1"/>
    <property type="molecule type" value="mRNA"/>
</dbReference>
<dbReference type="CCDS" id="CCDS49100.1"/>
<dbReference type="RefSeq" id="NP_001170974.1">
    <property type="nucleotide sequence ID" value="NM_001177503.1"/>
</dbReference>
<dbReference type="SMR" id="B2RPU2"/>
<dbReference type="FunCoup" id="B2RPU2">
    <property type="interactions" value="125"/>
</dbReference>
<dbReference type="STRING" id="10090.ENSMUSP00000119711"/>
<dbReference type="GlyGen" id="B2RPU2">
    <property type="glycosylation" value="1 site, 1 O-linked glycan (1 site)"/>
</dbReference>
<dbReference type="iPTMnet" id="B2RPU2"/>
<dbReference type="PhosphoSitePlus" id="B2RPU2"/>
<dbReference type="jPOST" id="B2RPU2"/>
<dbReference type="PaxDb" id="10090-ENSMUSP00000119711"/>
<dbReference type="PeptideAtlas" id="B2RPU2"/>
<dbReference type="ProteomicsDB" id="289544"/>
<dbReference type="Antibodypedia" id="55088">
    <property type="antibodies" value="5 antibodies from 5 providers"/>
</dbReference>
<dbReference type="Ensembl" id="ENSMUST00000140770.2">
    <property type="protein sequence ID" value="ENSMUSP00000119711.2"/>
    <property type="gene ID" value="ENSMUSG00000066438.7"/>
</dbReference>
<dbReference type="GeneID" id="217682"/>
<dbReference type="KEGG" id="mmu:217682"/>
<dbReference type="UCSC" id="uc007obf.2">
    <property type="organism name" value="mouse"/>
</dbReference>
<dbReference type="AGR" id="MGI:3036228"/>
<dbReference type="CTD" id="400224"/>
<dbReference type="MGI" id="MGI:3036228">
    <property type="gene designation" value="Plekhd1"/>
</dbReference>
<dbReference type="VEuPathDB" id="HostDB:ENSMUSG00000066438"/>
<dbReference type="eggNOG" id="ENOG502QTF5">
    <property type="taxonomic scope" value="Eukaryota"/>
</dbReference>
<dbReference type="GeneTree" id="ENSGT00950000183017"/>
<dbReference type="HOGENOM" id="CLU_035364_0_0_1"/>
<dbReference type="InParanoid" id="B2RPU2"/>
<dbReference type="OMA" id="ANEDMGM"/>
<dbReference type="OrthoDB" id="185175at2759"/>
<dbReference type="PhylomeDB" id="B2RPU2"/>
<dbReference type="TreeFam" id="TF320494"/>
<dbReference type="BioGRID-ORCS" id="217682">
    <property type="hits" value="0 hits in 77 CRISPR screens"/>
</dbReference>
<dbReference type="PRO" id="PR:B2RPU2"/>
<dbReference type="Proteomes" id="UP000000589">
    <property type="component" value="Chromosome 12"/>
</dbReference>
<dbReference type="RNAct" id="B2RPU2">
    <property type="molecule type" value="protein"/>
</dbReference>
<dbReference type="Bgee" id="ENSMUSG00000066438">
    <property type="expression patterns" value="Expressed in facial nucleus and 90 other cell types or tissues"/>
</dbReference>
<dbReference type="CDD" id="cd13281">
    <property type="entry name" value="PH_PLEKHD1"/>
    <property type="match status" value="1"/>
</dbReference>
<dbReference type="Gene3D" id="2.30.29.30">
    <property type="entry name" value="Pleckstrin-homology domain (PH domain)/Phosphotyrosine-binding domain (PTB)"/>
    <property type="match status" value="1"/>
</dbReference>
<dbReference type="InterPro" id="IPR011993">
    <property type="entry name" value="PH-like_dom_sf"/>
</dbReference>
<dbReference type="InterPro" id="IPR001849">
    <property type="entry name" value="PH_domain"/>
</dbReference>
<dbReference type="PANTHER" id="PTHR14383:SF1">
    <property type="entry name" value="PLECKSTRIN HOMOLOGY DOMAIN-CONTAINING FAMILY D MEMBER 1"/>
    <property type="match status" value="1"/>
</dbReference>
<dbReference type="PANTHER" id="PTHR14383">
    <property type="entry name" value="SWAP-70 RECOMBINASE"/>
    <property type="match status" value="1"/>
</dbReference>
<dbReference type="Pfam" id="PF00169">
    <property type="entry name" value="PH"/>
    <property type="match status" value="1"/>
</dbReference>
<dbReference type="SMART" id="SM00233">
    <property type="entry name" value="PH"/>
    <property type="match status" value="1"/>
</dbReference>
<dbReference type="SUPFAM" id="SSF50729">
    <property type="entry name" value="PH domain-like"/>
    <property type="match status" value="1"/>
</dbReference>
<dbReference type="PROSITE" id="PS50003">
    <property type="entry name" value="PH_DOMAIN"/>
    <property type="match status" value="1"/>
</dbReference>
<name>PLHD1_MOUSE</name>
<proteinExistence type="evidence at protein level"/>
<accession>B2RPU2</accession>
<sequence>MFTSKSNSVSPSPSLEQADADALDISTKVQLYGVLWKRPFGRSSAKWSRRFFIIKESFLLYYSESERKSFETNKYFNIHPKGVIPLGGCLVEAREEPSMPYAMKISHQDFHGNVLLAAESEFEQTQWLEMLQESGKVTWKNAQLGEAMIKSLEAQGLQLAKEKQEYLDKLMEETEELCLQREQREELERLNQVLEAEKQQFEEVVQELRVEQEQIKRELELTARCLKGVEQEKKELRHLTESLQHTLEELSIEKKKTLEMLEEDKNQPQPLTNQSEQPPASDGLHSNLRQIEERMQELLAEKLLAEKRMKENEERSRALEEEREFYSSQSQALQNSLQELTAEKQQAERELKAEVKVRMDLERRLREAEAALRSLEQGLNSKVRNKEKEERMRADVSHLKRFFEECIRNAELEAKMPVIMKNSVYIHKAATRRIKSCRFHRRRSSTSWNDMKPSQSFMTSQLEANNIEELKEVAKRLSRDQRFRESIYHIMATQPGASALPRGGK</sequence>
<comment type="similarity">
    <text evidence="4">Belongs to the PLEKHD1 family.</text>
</comment>